<name>CLF1_DEBHA</name>
<accession>Q6BSP7</accession>
<accession>B5RTE5</accession>
<protein>
    <recommendedName>
        <fullName>Pre-mRNA-splicing factor CLF1</fullName>
    </recommendedName>
</protein>
<comment type="function">
    <text evidence="1">Involved in pre-mRNA splicing and cell cycle progression. Required for the spliceosome assembly and initiation of the DNA replication (By similarity).</text>
</comment>
<comment type="subunit">
    <text evidence="1">Associated with the spliceosome.</text>
</comment>
<comment type="subcellular location">
    <subcellularLocation>
        <location evidence="1">Nucleus</location>
    </subcellularLocation>
</comment>
<comment type="similarity">
    <text evidence="2">Belongs to the crooked-neck family.</text>
</comment>
<proteinExistence type="inferred from homology"/>
<sequence length="714" mass="85690">MNTDGLSREKVSDSQITSEQILQDAFQLKDEPLNRPKQSIQDLDELRSFQLTKRKEYEQQLNKNRLNFGQWLRYAKWEVKHNHDFPRARSIFERALEVNVQHIPFWTHYIQFELSHKNITHARNLLDRAVTTLPRVDKLWFLYVQTEETLKNYQMVRIIFERWLSWNPNPSAWDAYINYEKRYDEYDNAREIYIRYVQIHSSGEIWLKWIDFEMNDVPIDPEQVKRIRNVFELSVDSMLASEALRGDISLAEIINKWSLWEISVKEYERARAIFQLMLKSDTIQEIITPEQRNQIYSSYTEFEKSYGDKDTIESSIMIKRKLKYEEEVNKSPSDYDSWWSYISILQQEDNNEVTRETFERAIKVIPTDAFKSTVWRRYIYIWVKYAFWEEFTMGSIENGRNIWNKALKVIPHKRFTFAKIWISFAQFEIRNDPENGLASARKILGRSIGQSSTVKPKRKLFKFYIELEQKLGEWDRVRKLYEKWLELSLVGENNLSTINSLLTYIDFEKNIQEHQRCISLFELGVRLAEDDKIFTKVNPLEYMLMQFINYYKEEMRYAEARSLYRKLVERVSTPKVWISFALFESSIPTDSQLKAFEESTEEEFEFSIDETHRETTRSVFREANDFFKHNNLKEDRAVVIEAWKQYEEANGSEESLRDITKKLPVIVKRRRLIEGEEEEYLDYIFPEDEEAKPSKISGLNAFLANAQKWMANQN</sequence>
<reference key="1">
    <citation type="journal article" date="2004" name="Nature">
        <title>Genome evolution in yeasts.</title>
        <authorList>
            <person name="Dujon B."/>
            <person name="Sherman D."/>
            <person name="Fischer G."/>
            <person name="Durrens P."/>
            <person name="Casaregola S."/>
            <person name="Lafontaine I."/>
            <person name="de Montigny J."/>
            <person name="Marck C."/>
            <person name="Neuveglise C."/>
            <person name="Talla E."/>
            <person name="Goffard N."/>
            <person name="Frangeul L."/>
            <person name="Aigle M."/>
            <person name="Anthouard V."/>
            <person name="Babour A."/>
            <person name="Barbe V."/>
            <person name="Barnay S."/>
            <person name="Blanchin S."/>
            <person name="Beckerich J.-M."/>
            <person name="Beyne E."/>
            <person name="Bleykasten C."/>
            <person name="Boisrame A."/>
            <person name="Boyer J."/>
            <person name="Cattolico L."/>
            <person name="Confanioleri F."/>
            <person name="de Daruvar A."/>
            <person name="Despons L."/>
            <person name="Fabre E."/>
            <person name="Fairhead C."/>
            <person name="Ferry-Dumazet H."/>
            <person name="Groppi A."/>
            <person name="Hantraye F."/>
            <person name="Hennequin C."/>
            <person name="Jauniaux N."/>
            <person name="Joyet P."/>
            <person name="Kachouri R."/>
            <person name="Kerrest A."/>
            <person name="Koszul R."/>
            <person name="Lemaire M."/>
            <person name="Lesur I."/>
            <person name="Ma L."/>
            <person name="Muller H."/>
            <person name="Nicaud J.-M."/>
            <person name="Nikolski M."/>
            <person name="Oztas S."/>
            <person name="Ozier-Kalogeropoulos O."/>
            <person name="Pellenz S."/>
            <person name="Potier S."/>
            <person name="Richard G.-F."/>
            <person name="Straub M.-L."/>
            <person name="Suleau A."/>
            <person name="Swennen D."/>
            <person name="Tekaia F."/>
            <person name="Wesolowski-Louvel M."/>
            <person name="Westhof E."/>
            <person name="Wirth B."/>
            <person name="Zeniou-Meyer M."/>
            <person name="Zivanovic Y."/>
            <person name="Bolotin-Fukuhara M."/>
            <person name="Thierry A."/>
            <person name="Bouchier C."/>
            <person name="Caudron B."/>
            <person name="Scarpelli C."/>
            <person name="Gaillardin C."/>
            <person name="Weissenbach J."/>
            <person name="Wincker P."/>
            <person name="Souciet J.-L."/>
        </authorList>
    </citation>
    <scope>NUCLEOTIDE SEQUENCE [LARGE SCALE GENOMIC DNA]</scope>
    <source>
        <strain>ATCC 36239 / CBS 767 / BCRC 21394 / JCM 1990 / NBRC 0083 / IGC 2968</strain>
    </source>
</reference>
<dbReference type="EMBL" id="CR382136">
    <property type="protein sequence ID" value="CAR65630.1"/>
    <property type="molecule type" value="Genomic_DNA"/>
</dbReference>
<dbReference type="RefSeq" id="XP_002770274.1">
    <property type="nucleotide sequence ID" value="XM_002770228.1"/>
</dbReference>
<dbReference type="SMR" id="Q6BSP7"/>
<dbReference type="FunCoup" id="Q6BSP7">
    <property type="interactions" value="1139"/>
</dbReference>
<dbReference type="STRING" id="284592.Q6BSP7"/>
<dbReference type="GeneID" id="8998482"/>
<dbReference type="KEGG" id="dha:DEHA2D07172g"/>
<dbReference type="VEuPathDB" id="FungiDB:DEHA2D07172g"/>
<dbReference type="eggNOG" id="KOG1915">
    <property type="taxonomic scope" value="Eukaryota"/>
</dbReference>
<dbReference type="HOGENOM" id="CLU_011554_1_0_1"/>
<dbReference type="InParanoid" id="Q6BSP7"/>
<dbReference type="OMA" id="HIKVWIS"/>
<dbReference type="OrthoDB" id="541719at2759"/>
<dbReference type="Proteomes" id="UP000000599">
    <property type="component" value="Chromosome D"/>
</dbReference>
<dbReference type="GO" id="GO:0000785">
    <property type="term" value="C:chromatin"/>
    <property type="evidence" value="ECO:0007669"/>
    <property type="project" value="EnsemblFungi"/>
</dbReference>
<dbReference type="GO" id="GO:0071011">
    <property type="term" value="C:precatalytic spliceosome"/>
    <property type="evidence" value="ECO:0007669"/>
    <property type="project" value="TreeGrafter"/>
</dbReference>
<dbReference type="GO" id="GO:0000974">
    <property type="term" value="C:Prp19 complex"/>
    <property type="evidence" value="ECO:0007669"/>
    <property type="project" value="EnsemblFungi"/>
</dbReference>
<dbReference type="GO" id="GO:0071006">
    <property type="term" value="C:U2-type catalytic step 1 spliceosome"/>
    <property type="evidence" value="ECO:0007669"/>
    <property type="project" value="EnsemblFungi"/>
</dbReference>
<dbReference type="GO" id="GO:0071007">
    <property type="term" value="C:U2-type catalytic step 2 spliceosome"/>
    <property type="evidence" value="ECO:0007669"/>
    <property type="project" value="EnsemblFungi"/>
</dbReference>
<dbReference type="GO" id="GO:0071008">
    <property type="term" value="C:U2-type post-mRNA release spliceosomal complex"/>
    <property type="evidence" value="ECO:0007669"/>
    <property type="project" value="EnsemblFungi"/>
</dbReference>
<dbReference type="GO" id="GO:0071004">
    <property type="term" value="C:U2-type prespliceosome"/>
    <property type="evidence" value="ECO:0007669"/>
    <property type="project" value="EnsemblFungi"/>
</dbReference>
<dbReference type="GO" id="GO:0003682">
    <property type="term" value="F:chromatin binding"/>
    <property type="evidence" value="ECO:0007669"/>
    <property type="project" value="EnsemblFungi"/>
</dbReference>
<dbReference type="GO" id="GO:0003688">
    <property type="term" value="F:DNA replication origin binding"/>
    <property type="evidence" value="ECO:0007669"/>
    <property type="project" value="EnsemblFungi"/>
</dbReference>
<dbReference type="GO" id="GO:0000354">
    <property type="term" value="P:cis assembly of pre-catalytic spliceosome"/>
    <property type="evidence" value="ECO:0007669"/>
    <property type="project" value="EnsemblFungi"/>
</dbReference>
<dbReference type="GO" id="GO:0006270">
    <property type="term" value="P:DNA replication initiation"/>
    <property type="evidence" value="ECO:0007669"/>
    <property type="project" value="EnsemblFungi"/>
</dbReference>
<dbReference type="Gene3D" id="1.25.40.10">
    <property type="entry name" value="Tetratricopeptide repeat domain"/>
    <property type="match status" value="3"/>
</dbReference>
<dbReference type="InterPro" id="IPR003107">
    <property type="entry name" value="HAT"/>
</dbReference>
<dbReference type="InterPro" id="IPR055433">
    <property type="entry name" value="HAT_Syf1-like_N"/>
</dbReference>
<dbReference type="InterPro" id="IPR045075">
    <property type="entry name" value="Syf1-like"/>
</dbReference>
<dbReference type="InterPro" id="IPR011990">
    <property type="entry name" value="TPR-like_helical_dom_sf"/>
</dbReference>
<dbReference type="PANTHER" id="PTHR11246:SF3">
    <property type="entry name" value="CROOKED NECK-LIKE PROTEIN 1"/>
    <property type="match status" value="1"/>
</dbReference>
<dbReference type="PANTHER" id="PTHR11246">
    <property type="entry name" value="PRE-MRNA SPLICING FACTOR"/>
    <property type="match status" value="1"/>
</dbReference>
<dbReference type="Pfam" id="PF23233">
    <property type="entry name" value="HAT_Syf1_CNRKL1_N"/>
    <property type="match status" value="2"/>
</dbReference>
<dbReference type="SMART" id="SM00386">
    <property type="entry name" value="HAT"/>
    <property type="match status" value="11"/>
</dbReference>
<dbReference type="SUPFAM" id="SSF48452">
    <property type="entry name" value="TPR-like"/>
    <property type="match status" value="3"/>
</dbReference>
<organism>
    <name type="scientific">Debaryomyces hansenii (strain ATCC 36239 / CBS 767 / BCRC 21394 / JCM 1990 / NBRC 0083 / IGC 2968)</name>
    <name type="common">Yeast</name>
    <name type="synonym">Torulaspora hansenii</name>
    <dbReference type="NCBI Taxonomy" id="284592"/>
    <lineage>
        <taxon>Eukaryota</taxon>
        <taxon>Fungi</taxon>
        <taxon>Dikarya</taxon>
        <taxon>Ascomycota</taxon>
        <taxon>Saccharomycotina</taxon>
        <taxon>Pichiomycetes</taxon>
        <taxon>Debaryomycetaceae</taxon>
        <taxon>Debaryomyces</taxon>
    </lineage>
</organism>
<gene>
    <name type="primary">CLF1</name>
    <name type="ordered locus">DEHA2D07172g</name>
</gene>
<keyword id="KW-0507">mRNA processing</keyword>
<keyword id="KW-0508">mRNA splicing</keyword>
<keyword id="KW-0539">Nucleus</keyword>
<keyword id="KW-1185">Reference proteome</keyword>
<keyword id="KW-0677">Repeat</keyword>
<keyword id="KW-0747">Spliceosome</keyword>
<feature type="chain" id="PRO_0000205744" description="Pre-mRNA-splicing factor CLF1">
    <location>
        <begin position="1"/>
        <end position="714"/>
    </location>
</feature>
<feature type="repeat" description="HAT 1">
    <location>
        <begin position="48"/>
        <end position="80"/>
    </location>
</feature>
<feature type="repeat" description="HAT 2">
    <location>
        <begin position="83"/>
        <end position="115"/>
    </location>
</feature>
<feature type="repeat" description="HAT 3">
    <location>
        <begin position="117"/>
        <end position="149"/>
    </location>
</feature>
<feature type="repeat" description="HAT 4">
    <location>
        <begin position="151"/>
        <end position="182"/>
    </location>
</feature>
<feature type="repeat" description="HAT 5">
    <location>
        <begin position="184"/>
        <end position="215"/>
    </location>
</feature>
<feature type="repeat" description="HAT 6">
    <location>
        <begin position="265"/>
        <end position="305"/>
    </location>
</feature>
<feature type="repeat" description="HAT 7">
    <location>
        <begin position="315"/>
        <end position="347"/>
    </location>
</feature>
<feature type="repeat" description="HAT 8">
    <location>
        <begin position="349"/>
        <end position="384"/>
    </location>
</feature>
<feature type="repeat" description="HAT 9">
    <location>
        <begin position="394"/>
        <end position="430"/>
    </location>
</feature>
<feature type="repeat" description="HAT 10">
    <location>
        <begin position="435"/>
        <end position="470"/>
    </location>
</feature>
<feature type="repeat" description="HAT 11">
    <location>
        <begin position="472"/>
        <end position="510"/>
    </location>
</feature>
<feature type="repeat" description="HAT 12">
    <location>
        <begin position="555"/>
        <end position="586"/>
    </location>
</feature>
<evidence type="ECO:0000250" key="1"/>
<evidence type="ECO:0000305" key="2"/>